<sequence>MSKPLCSTGLRWLWLVVVVLIIDLGSKYLILQNFALGDTVGLFPSLNLHYARNYGAAFSFLADSGGWQRWFFAGIAIGICVILLVMMYRSKATQKLNNIAYALIIGGALGNLFDRLWHGFVVDMIDFYVGDWHFATFNLADSAICIGAALIVLEGFLPKPTAKEQA</sequence>
<organism>
    <name type="scientific">Salmonella schwarzengrund (strain CVM19633)</name>
    <dbReference type="NCBI Taxonomy" id="439843"/>
    <lineage>
        <taxon>Bacteria</taxon>
        <taxon>Pseudomonadati</taxon>
        <taxon>Pseudomonadota</taxon>
        <taxon>Gammaproteobacteria</taxon>
        <taxon>Enterobacterales</taxon>
        <taxon>Enterobacteriaceae</taxon>
        <taxon>Salmonella</taxon>
    </lineage>
</organism>
<comment type="function">
    <text evidence="1">This protein specifically catalyzes the removal of signal peptides from prolipoproteins.</text>
</comment>
<comment type="catalytic activity">
    <reaction evidence="1">
        <text>Release of signal peptides from bacterial membrane prolipoproteins. Hydrolyzes -Xaa-Yaa-Zaa-|-(S,diacylglyceryl)Cys-, in which Xaa is hydrophobic (preferably Leu), and Yaa (Ala or Ser) and Zaa (Gly or Ala) have small, neutral side chains.</text>
        <dbReference type="EC" id="3.4.23.36"/>
    </reaction>
</comment>
<comment type="pathway">
    <text evidence="1">Protein modification; lipoprotein biosynthesis (signal peptide cleavage).</text>
</comment>
<comment type="subcellular location">
    <subcellularLocation>
        <location evidence="1">Cell inner membrane</location>
        <topology evidence="1">Multi-pass membrane protein</topology>
    </subcellularLocation>
</comment>
<comment type="similarity">
    <text evidence="1">Belongs to the peptidase A8 family.</text>
</comment>
<protein>
    <recommendedName>
        <fullName evidence="1">Lipoprotein signal peptidase</fullName>
        <ecNumber evidence="1">3.4.23.36</ecNumber>
    </recommendedName>
    <alternativeName>
        <fullName evidence="1">Prolipoprotein signal peptidase</fullName>
    </alternativeName>
    <alternativeName>
        <fullName evidence="1">Signal peptidase II</fullName>
        <shortName evidence="1">SPase II</shortName>
    </alternativeName>
</protein>
<evidence type="ECO:0000255" key="1">
    <source>
        <dbReference type="HAMAP-Rule" id="MF_00161"/>
    </source>
</evidence>
<feature type="chain" id="PRO_1000097280" description="Lipoprotein signal peptidase">
    <location>
        <begin position="1"/>
        <end position="166"/>
    </location>
</feature>
<feature type="transmembrane region" description="Helical" evidence="1">
    <location>
        <begin position="12"/>
        <end position="32"/>
    </location>
</feature>
<feature type="transmembrane region" description="Helical" evidence="1">
    <location>
        <begin position="70"/>
        <end position="90"/>
    </location>
</feature>
<feature type="transmembrane region" description="Helical" evidence="1">
    <location>
        <begin position="102"/>
        <end position="122"/>
    </location>
</feature>
<feature type="transmembrane region" description="Helical" evidence="1">
    <location>
        <begin position="137"/>
        <end position="157"/>
    </location>
</feature>
<feature type="active site" evidence="1">
    <location>
        <position position="123"/>
    </location>
</feature>
<feature type="active site" evidence="1">
    <location>
        <position position="141"/>
    </location>
</feature>
<accession>B4TWN7</accession>
<name>LSPA_SALSV</name>
<dbReference type="EC" id="3.4.23.36" evidence="1"/>
<dbReference type="EMBL" id="CP001127">
    <property type="protein sequence ID" value="ACF90428.1"/>
    <property type="molecule type" value="Genomic_DNA"/>
</dbReference>
<dbReference type="RefSeq" id="WP_000042736.1">
    <property type="nucleotide sequence ID" value="NC_011094.1"/>
</dbReference>
<dbReference type="SMR" id="B4TWN7"/>
<dbReference type="MEROPS" id="A08.001"/>
<dbReference type="KEGG" id="sew:SeSA_A0051"/>
<dbReference type="HOGENOM" id="CLU_083252_4_0_6"/>
<dbReference type="UniPathway" id="UPA00665"/>
<dbReference type="Proteomes" id="UP000001865">
    <property type="component" value="Chromosome"/>
</dbReference>
<dbReference type="GO" id="GO:0005886">
    <property type="term" value="C:plasma membrane"/>
    <property type="evidence" value="ECO:0007669"/>
    <property type="project" value="UniProtKB-SubCell"/>
</dbReference>
<dbReference type="GO" id="GO:0004190">
    <property type="term" value="F:aspartic-type endopeptidase activity"/>
    <property type="evidence" value="ECO:0007669"/>
    <property type="project" value="UniProtKB-UniRule"/>
</dbReference>
<dbReference type="GO" id="GO:0006508">
    <property type="term" value="P:proteolysis"/>
    <property type="evidence" value="ECO:0007669"/>
    <property type="project" value="UniProtKB-KW"/>
</dbReference>
<dbReference type="HAMAP" id="MF_00161">
    <property type="entry name" value="LspA"/>
    <property type="match status" value="1"/>
</dbReference>
<dbReference type="InterPro" id="IPR001872">
    <property type="entry name" value="Peptidase_A8"/>
</dbReference>
<dbReference type="NCBIfam" id="TIGR00077">
    <property type="entry name" value="lspA"/>
    <property type="match status" value="1"/>
</dbReference>
<dbReference type="PANTHER" id="PTHR33695">
    <property type="entry name" value="LIPOPROTEIN SIGNAL PEPTIDASE"/>
    <property type="match status" value="1"/>
</dbReference>
<dbReference type="PANTHER" id="PTHR33695:SF1">
    <property type="entry name" value="LIPOPROTEIN SIGNAL PEPTIDASE"/>
    <property type="match status" value="1"/>
</dbReference>
<dbReference type="Pfam" id="PF01252">
    <property type="entry name" value="Peptidase_A8"/>
    <property type="match status" value="1"/>
</dbReference>
<dbReference type="PRINTS" id="PR00781">
    <property type="entry name" value="LIPOSIGPTASE"/>
</dbReference>
<dbReference type="PROSITE" id="PS00855">
    <property type="entry name" value="SPASE_II"/>
    <property type="match status" value="1"/>
</dbReference>
<proteinExistence type="inferred from homology"/>
<gene>
    <name evidence="1" type="primary">lspA</name>
    <name type="ordered locus">SeSA_A0051</name>
</gene>
<reference key="1">
    <citation type="journal article" date="2011" name="J. Bacteriol.">
        <title>Comparative genomics of 28 Salmonella enterica isolates: evidence for CRISPR-mediated adaptive sublineage evolution.</title>
        <authorList>
            <person name="Fricke W.F."/>
            <person name="Mammel M.K."/>
            <person name="McDermott P.F."/>
            <person name="Tartera C."/>
            <person name="White D.G."/>
            <person name="Leclerc J.E."/>
            <person name="Ravel J."/>
            <person name="Cebula T.A."/>
        </authorList>
    </citation>
    <scope>NUCLEOTIDE SEQUENCE [LARGE SCALE GENOMIC DNA]</scope>
    <source>
        <strain>CVM19633</strain>
    </source>
</reference>
<keyword id="KW-0064">Aspartyl protease</keyword>
<keyword id="KW-0997">Cell inner membrane</keyword>
<keyword id="KW-1003">Cell membrane</keyword>
<keyword id="KW-0378">Hydrolase</keyword>
<keyword id="KW-0472">Membrane</keyword>
<keyword id="KW-0645">Protease</keyword>
<keyword id="KW-0812">Transmembrane</keyword>
<keyword id="KW-1133">Transmembrane helix</keyword>